<organism>
    <name type="scientific">Rickettsia peacockii (strain Rustic)</name>
    <dbReference type="NCBI Taxonomy" id="562019"/>
    <lineage>
        <taxon>Bacteria</taxon>
        <taxon>Pseudomonadati</taxon>
        <taxon>Pseudomonadota</taxon>
        <taxon>Alphaproteobacteria</taxon>
        <taxon>Rickettsiales</taxon>
        <taxon>Rickettsiaceae</taxon>
        <taxon>Rickettsieae</taxon>
        <taxon>Rickettsia</taxon>
        <taxon>spotted fever group</taxon>
    </lineage>
</organism>
<keyword id="KW-0963">Cytoplasm</keyword>
<keyword id="KW-0238">DNA-binding</keyword>
<keyword id="KW-0677">Repeat</keyword>
<keyword id="KW-0804">Transcription</keyword>
<keyword id="KW-0805">Transcription regulation</keyword>
<comment type="subunit">
    <text evidence="1">Forms oligomers.</text>
</comment>
<comment type="subcellular location">
    <subcellularLocation>
        <location evidence="1">Cytoplasm</location>
        <location evidence="1">Nucleoid</location>
    </subcellularLocation>
</comment>
<comment type="similarity">
    <text evidence="1">Belongs to the MraZ family.</text>
</comment>
<protein>
    <recommendedName>
        <fullName>Transcriptional regulator MraZ</fullName>
    </recommendedName>
</protein>
<proteinExistence type="inferred from homology"/>
<reference key="1">
    <citation type="journal article" date="2009" name="PLoS ONE">
        <title>Genome sequence of the endosymbiont Rickettsia peacockii and comparison with virulent Rickettsia rickettsii: identification of virulence factors.</title>
        <authorList>
            <person name="Felsheim R.F."/>
            <person name="Kurtti T.J."/>
            <person name="Munderloh U.G."/>
        </authorList>
    </citation>
    <scope>NUCLEOTIDE SEQUENCE [LARGE SCALE GENOMIC DNA]</scope>
    <source>
        <strain>Rustic</strain>
    </source>
</reference>
<dbReference type="EMBL" id="CP001227">
    <property type="protein sequence ID" value="ACR47469.1"/>
    <property type="molecule type" value="Genomic_DNA"/>
</dbReference>
<dbReference type="RefSeq" id="WP_012736706.1">
    <property type="nucleotide sequence ID" value="NC_012730.1"/>
</dbReference>
<dbReference type="SMR" id="C4K1L9"/>
<dbReference type="KEGG" id="rpk:RPR_03730"/>
<dbReference type="HOGENOM" id="CLU_107907_1_0_5"/>
<dbReference type="Proteomes" id="UP000005015">
    <property type="component" value="Chromosome"/>
</dbReference>
<dbReference type="GO" id="GO:0005737">
    <property type="term" value="C:cytoplasm"/>
    <property type="evidence" value="ECO:0007669"/>
    <property type="project" value="UniProtKB-UniRule"/>
</dbReference>
<dbReference type="GO" id="GO:0009295">
    <property type="term" value="C:nucleoid"/>
    <property type="evidence" value="ECO:0007669"/>
    <property type="project" value="UniProtKB-SubCell"/>
</dbReference>
<dbReference type="GO" id="GO:0003700">
    <property type="term" value="F:DNA-binding transcription factor activity"/>
    <property type="evidence" value="ECO:0007669"/>
    <property type="project" value="UniProtKB-UniRule"/>
</dbReference>
<dbReference type="GO" id="GO:0000976">
    <property type="term" value="F:transcription cis-regulatory region binding"/>
    <property type="evidence" value="ECO:0007669"/>
    <property type="project" value="TreeGrafter"/>
</dbReference>
<dbReference type="GO" id="GO:2000143">
    <property type="term" value="P:negative regulation of DNA-templated transcription initiation"/>
    <property type="evidence" value="ECO:0007669"/>
    <property type="project" value="TreeGrafter"/>
</dbReference>
<dbReference type="CDD" id="cd16321">
    <property type="entry name" value="MraZ_C"/>
    <property type="match status" value="1"/>
</dbReference>
<dbReference type="CDD" id="cd16320">
    <property type="entry name" value="MraZ_N"/>
    <property type="match status" value="1"/>
</dbReference>
<dbReference type="Gene3D" id="3.40.1550.20">
    <property type="entry name" value="Transcriptional regulator MraZ domain"/>
    <property type="match status" value="1"/>
</dbReference>
<dbReference type="HAMAP" id="MF_01008">
    <property type="entry name" value="MraZ"/>
    <property type="match status" value="1"/>
</dbReference>
<dbReference type="InterPro" id="IPR003444">
    <property type="entry name" value="MraZ"/>
</dbReference>
<dbReference type="InterPro" id="IPR035644">
    <property type="entry name" value="MraZ_C"/>
</dbReference>
<dbReference type="InterPro" id="IPR020603">
    <property type="entry name" value="MraZ_dom"/>
</dbReference>
<dbReference type="InterPro" id="IPR035642">
    <property type="entry name" value="MraZ_N"/>
</dbReference>
<dbReference type="InterPro" id="IPR038619">
    <property type="entry name" value="MraZ_sf"/>
</dbReference>
<dbReference type="InterPro" id="IPR007159">
    <property type="entry name" value="SpoVT-AbrB_dom"/>
</dbReference>
<dbReference type="InterPro" id="IPR037914">
    <property type="entry name" value="SpoVT-AbrB_sf"/>
</dbReference>
<dbReference type="NCBIfam" id="NF001475">
    <property type="entry name" value="PRK00326.2-1"/>
    <property type="match status" value="1"/>
</dbReference>
<dbReference type="PANTHER" id="PTHR34701">
    <property type="entry name" value="TRANSCRIPTIONAL REGULATOR MRAZ"/>
    <property type="match status" value="1"/>
</dbReference>
<dbReference type="PANTHER" id="PTHR34701:SF1">
    <property type="entry name" value="TRANSCRIPTIONAL REGULATOR MRAZ"/>
    <property type="match status" value="1"/>
</dbReference>
<dbReference type="Pfam" id="PF02381">
    <property type="entry name" value="MraZ"/>
    <property type="match status" value="1"/>
</dbReference>
<dbReference type="SUPFAM" id="SSF89447">
    <property type="entry name" value="AbrB/MazE/MraZ-like"/>
    <property type="match status" value="1"/>
</dbReference>
<dbReference type="PROSITE" id="PS51740">
    <property type="entry name" value="SPOVT_ABRB"/>
    <property type="match status" value="2"/>
</dbReference>
<accession>C4K1L9</accession>
<evidence type="ECO:0000255" key="1">
    <source>
        <dbReference type="HAMAP-Rule" id="MF_01008"/>
    </source>
</evidence>
<evidence type="ECO:0000255" key="2">
    <source>
        <dbReference type="PROSITE-ProRule" id="PRU01076"/>
    </source>
</evidence>
<name>MRAZ_RICPU</name>
<feature type="chain" id="PRO_1000213184" description="Transcriptional regulator MraZ">
    <location>
        <begin position="1"/>
        <end position="149"/>
    </location>
</feature>
<feature type="domain" description="SpoVT-AbrB 1" evidence="2">
    <location>
        <begin position="7"/>
        <end position="54"/>
    </location>
</feature>
<feature type="domain" description="SpoVT-AbrB 2" evidence="2">
    <location>
        <begin position="83"/>
        <end position="126"/>
    </location>
</feature>
<gene>
    <name evidence="1" type="primary">mraZ</name>
    <name type="ordered locus">RPR_03730</name>
</gene>
<sequence length="149" mass="16921">MNVFLSKYVNGVDKKSRVSVPANYRAVLGKELFNGVIAYPSIRNNCIEVCGISHIEKLRQMTETLDPYSEERDAFETMIFGEAVQLSFDGEGRVILPQSLMKHAGIEEQACFVGKGVIFEIWQPQNFEKYLNAAQKIAHEKRLTLRNAH</sequence>